<protein>
    <recommendedName>
        <fullName>ASTRA-associated protein 1</fullName>
    </recommendedName>
</protein>
<organism>
    <name type="scientific">Aspergillus flavus (strain ATCC 200026 / FGSC A1120 / IAM 13836 / NRRL 3357 / JCM 12722 / SRRC 167)</name>
    <dbReference type="NCBI Taxonomy" id="332952"/>
    <lineage>
        <taxon>Eukaryota</taxon>
        <taxon>Fungi</taxon>
        <taxon>Dikarya</taxon>
        <taxon>Ascomycota</taxon>
        <taxon>Pezizomycotina</taxon>
        <taxon>Eurotiomycetes</taxon>
        <taxon>Eurotiomycetidae</taxon>
        <taxon>Eurotiales</taxon>
        <taxon>Aspergillaceae</taxon>
        <taxon>Aspergillus</taxon>
        <taxon>Aspergillus subgen. Circumdati</taxon>
    </lineage>
</organism>
<comment type="function">
    <text evidence="1">Component of the ASTRA complex involved in chromatin remodeling.</text>
</comment>
<comment type="subunit">
    <text evidence="1">Component of the ASTRA chromatin remodeling machinery complex.</text>
</comment>
<comment type="subcellular location">
    <subcellularLocation>
        <location evidence="1">Nucleus</location>
    </subcellularLocation>
</comment>
<comment type="similarity">
    <text evidence="3">Belongs to the WD repeat ASA1 family.</text>
</comment>
<accession>B8NG55</accession>
<dbReference type="EMBL" id="EQ963478">
    <property type="protein sequence ID" value="EED50454.1"/>
    <property type="molecule type" value="Genomic_DNA"/>
</dbReference>
<dbReference type="RefSeq" id="XP_002379230.1">
    <property type="nucleotide sequence ID" value="XM_002379189.1"/>
</dbReference>
<dbReference type="STRING" id="332952.B8NG55"/>
<dbReference type="EnsemblFungi" id="EED50454">
    <property type="protein sequence ID" value="EED50454"/>
    <property type="gene ID" value="AFLA_132160"/>
</dbReference>
<dbReference type="VEuPathDB" id="FungiDB:AFLA_005541"/>
<dbReference type="eggNOG" id="KOG0322">
    <property type="taxonomic scope" value="Eukaryota"/>
</dbReference>
<dbReference type="HOGENOM" id="CLU_041940_0_1_1"/>
<dbReference type="OMA" id="WHKEGVY"/>
<dbReference type="GO" id="GO:0005634">
    <property type="term" value="C:nucleus"/>
    <property type="evidence" value="ECO:0007669"/>
    <property type="project" value="UniProtKB-SubCell"/>
</dbReference>
<dbReference type="GO" id="GO:0006325">
    <property type="term" value="P:chromatin organization"/>
    <property type="evidence" value="ECO:0007669"/>
    <property type="project" value="UniProtKB-KW"/>
</dbReference>
<dbReference type="Gene3D" id="2.130.10.10">
    <property type="entry name" value="YVTN repeat-like/Quinoprotein amine dehydrogenase"/>
    <property type="match status" value="3"/>
</dbReference>
<dbReference type="InterPro" id="IPR015943">
    <property type="entry name" value="WD40/YVTN_repeat-like_dom_sf"/>
</dbReference>
<dbReference type="InterPro" id="IPR019775">
    <property type="entry name" value="WD40_repeat_CS"/>
</dbReference>
<dbReference type="InterPro" id="IPR036322">
    <property type="entry name" value="WD40_repeat_dom_sf"/>
</dbReference>
<dbReference type="InterPro" id="IPR001680">
    <property type="entry name" value="WD40_rpt"/>
</dbReference>
<dbReference type="PANTHER" id="PTHR19854:SF1">
    <property type="entry name" value="GUANINE NUCLEOTIDE-BINDING PROTEIN SUBUNIT BETA-LIKE PROTEIN 1"/>
    <property type="match status" value="1"/>
</dbReference>
<dbReference type="PANTHER" id="PTHR19854">
    <property type="entry name" value="TRANSDUCIN BETA-LIKE 3"/>
    <property type="match status" value="1"/>
</dbReference>
<dbReference type="Pfam" id="PF00400">
    <property type="entry name" value="WD40"/>
    <property type="match status" value="3"/>
</dbReference>
<dbReference type="SMART" id="SM00320">
    <property type="entry name" value="WD40"/>
    <property type="match status" value="6"/>
</dbReference>
<dbReference type="SUPFAM" id="SSF50978">
    <property type="entry name" value="WD40 repeat-like"/>
    <property type="match status" value="1"/>
</dbReference>
<dbReference type="PROSITE" id="PS00678">
    <property type="entry name" value="WD_REPEATS_1"/>
    <property type="match status" value="2"/>
</dbReference>
<dbReference type="PROSITE" id="PS50082">
    <property type="entry name" value="WD_REPEATS_2"/>
    <property type="match status" value="2"/>
</dbReference>
<dbReference type="PROSITE" id="PS50294">
    <property type="entry name" value="WD_REPEATS_REGION"/>
    <property type="match status" value="1"/>
</dbReference>
<keyword id="KW-0156">Chromatin regulator</keyword>
<keyword id="KW-0539">Nucleus</keyword>
<keyword id="KW-0677">Repeat</keyword>
<keyword id="KW-0853">WD repeat</keyword>
<evidence type="ECO:0000250" key="1"/>
<evidence type="ECO:0000256" key="2">
    <source>
        <dbReference type="SAM" id="MobiDB-lite"/>
    </source>
</evidence>
<evidence type="ECO:0000305" key="3"/>
<name>ASA1_ASPFN</name>
<reference key="1">
    <citation type="journal article" date="2015" name="Genome Announc.">
        <title>Genome sequence of Aspergillus flavus NRRL 3357, a strain that causes aflatoxin contamination of food and feed.</title>
        <authorList>
            <person name="Nierman W.C."/>
            <person name="Yu J."/>
            <person name="Fedorova-Abrams N.D."/>
            <person name="Losada L."/>
            <person name="Cleveland T.E."/>
            <person name="Bhatnagar D."/>
            <person name="Bennett J.W."/>
            <person name="Dean R."/>
            <person name="Payne G.A."/>
        </authorList>
    </citation>
    <scope>NUCLEOTIDE SEQUENCE [LARGE SCALE GENOMIC DNA]</scope>
    <source>
        <strain>ATCC 200026 / FGSC A1120 / IAM 13836 / NRRL 3357 / JCM 12722 / SRRC 167</strain>
    </source>
</reference>
<gene>
    <name type="primary">asa1</name>
    <name type="ORF">AFLA_132160</name>
</gene>
<sequence length="429" mass="47384">MSTPTQLQPPASPTYILRGHASPIHGLHIFHQNLRLISGDADGWIIVWDLVFKRPVAVWKAHEGAILEVKGFTFSNQTVTEVYTHGRDHKLCVWRFRAQDEDLLQKTLPVDISEQNQSQATQPWLVHSLPVNALNFCAFSMLFLDEEESPDTGEPEASDKTSTQSPGKNPPQHHSLFAVPNALNSGAIDIFHLPRERRLCTIPADQTTQTGMVMAVTLFYSSTRELYIASAYEDGHVMVFALRGQLTTQDFSGKASSDSWKWERVYVARAHSQPALSIDVFPAGGYFVSSSADALVVKHPVPGFGEVGTVKKVDTKHSGQQGVRIRSDGRVFATAGWDSRVRVYSCKTLRELAVLKWHKEGCYTVAFADVEGSFDSGGGATGDGDGAQVTKSGEFSLATVRRQRNQKVQKTHWLAAGSKDGKISLWDIY</sequence>
<feature type="chain" id="PRO_0000402202" description="ASTRA-associated protein 1">
    <location>
        <begin position="1"/>
        <end position="429"/>
    </location>
</feature>
<feature type="repeat" description="WD 1">
    <location>
        <begin position="19"/>
        <end position="58"/>
    </location>
</feature>
<feature type="repeat" description="WD 2">
    <location>
        <begin position="64"/>
        <end position="104"/>
    </location>
</feature>
<feature type="repeat" description="WD 3">
    <location>
        <begin position="208"/>
        <end position="250"/>
    </location>
</feature>
<feature type="repeat" description="WD 4">
    <location>
        <begin position="270"/>
        <end position="314"/>
    </location>
</feature>
<feature type="repeat" description="WD 5">
    <location>
        <begin position="315"/>
        <end position="354"/>
    </location>
</feature>
<feature type="repeat" description="WD 6">
    <location>
        <begin position="392"/>
        <end position="429"/>
    </location>
</feature>
<feature type="region of interest" description="Disordered" evidence="2">
    <location>
        <begin position="148"/>
        <end position="176"/>
    </location>
</feature>
<proteinExistence type="inferred from homology"/>